<evidence type="ECO:0000255" key="1">
    <source>
        <dbReference type="HAMAP-Rule" id="MF_00539"/>
    </source>
</evidence>
<evidence type="ECO:0000256" key="2">
    <source>
        <dbReference type="SAM" id="MobiDB-lite"/>
    </source>
</evidence>
<evidence type="ECO:0000305" key="3"/>
<keyword id="KW-1185">Reference proteome</keyword>
<keyword id="KW-0687">Ribonucleoprotein</keyword>
<keyword id="KW-0689">Ribosomal protein</keyword>
<protein>
    <recommendedName>
        <fullName evidence="1">Large ribosomal subunit protein bL27</fullName>
    </recommendedName>
    <alternativeName>
        <fullName evidence="3">50S ribosomal protein L27</fullName>
    </alternativeName>
</protein>
<proteinExistence type="inferred from homology"/>
<organism>
    <name type="scientific">Baumannia cicadellinicola subsp. Homalodisca coagulata</name>
    <dbReference type="NCBI Taxonomy" id="374463"/>
    <lineage>
        <taxon>Bacteria</taxon>
        <taxon>Pseudomonadati</taxon>
        <taxon>Pseudomonadota</taxon>
        <taxon>Gammaproteobacteria</taxon>
        <taxon>Candidatus Palibaumannia</taxon>
    </lineage>
</organism>
<dbReference type="EMBL" id="CP000238">
    <property type="protein sequence ID" value="ABF13901.1"/>
    <property type="molecule type" value="Genomic_DNA"/>
</dbReference>
<dbReference type="RefSeq" id="WP_011520799.1">
    <property type="nucleotide sequence ID" value="NC_007984.1"/>
</dbReference>
<dbReference type="SMR" id="Q1LSJ8"/>
<dbReference type="STRING" id="374463.BCI_0643"/>
<dbReference type="KEGG" id="bci:BCI_0643"/>
<dbReference type="HOGENOM" id="CLU_095424_4_1_6"/>
<dbReference type="OrthoDB" id="9803474at2"/>
<dbReference type="Proteomes" id="UP000002427">
    <property type="component" value="Chromosome"/>
</dbReference>
<dbReference type="GO" id="GO:0022625">
    <property type="term" value="C:cytosolic large ribosomal subunit"/>
    <property type="evidence" value="ECO:0007669"/>
    <property type="project" value="TreeGrafter"/>
</dbReference>
<dbReference type="GO" id="GO:0003735">
    <property type="term" value="F:structural constituent of ribosome"/>
    <property type="evidence" value="ECO:0007669"/>
    <property type="project" value="InterPro"/>
</dbReference>
<dbReference type="GO" id="GO:0006412">
    <property type="term" value="P:translation"/>
    <property type="evidence" value="ECO:0007669"/>
    <property type="project" value="UniProtKB-UniRule"/>
</dbReference>
<dbReference type="FunFam" id="2.40.50.100:FF:000001">
    <property type="entry name" value="50S ribosomal protein L27"/>
    <property type="match status" value="1"/>
</dbReference>
<dbReference type="Gene3D" id="2.40.50.100">
    <property type="match status" value="1"/>
</dbReference>
<dbReference type="HAMAP" id="MF_00539">
    <property type="entry name" value="Ribosomal_bL27"/>
    <property type="match status" value="1"/>
</dbReference>
<dbReference type="InterPro" id="IPR001684">
    <property type="entry name" value="Ribosomal_bL27"/>
</dbReference>
<dbReference type="InterPro" id="IPR018261">
    <property type="entry name" value="Ribosomal_bL27_CS"/>
</dbReference>
<dbReference type="NCBIfam" id="TIGR00062">
    <property type="entry name" value="L27"/>
    <property type="match status" value="1"/>
</dbReference>
<dbReference type="PANTHER" id="PTHR15893:SF0">
    <property type="entry name" value="LARGE RIBOSOMAL SUBUNIT PROTEIN BL27M"/>
    <property type="match status" value="1"/>
</dbReference>
<dbReference type="PANTHER" id="PTHR15893">
    <property type="entry name" value="RIBOSOMAL PROTEIN L27"/>
    <property type="match status" value="1"/>
</dbReference>
<dbReference type="Pfam" id="PF01016">
    <property type="entry name" value="Ribosomal_L27"/>
    <property type="match status" value="1"/>
</dbReference>
<dbReference type="PRINTS" id="PR00063">
    <property type="entry name" value="RIBOSOMALL27"/>
</dbReference>
<dbReference type="SUPFAM" id="SSF110324">
    <property type="entry name" value="Ribosomal L27 protein-like"/>
    <property type="match status" value="1"/>
</dbReference>
<dbReference type="PROSITE" id="PS00831">
    <property type="entry name" value="RIBOSOMAL_L27"/>
    <property type="match status" value="1"/>
</dbReference>
<reference key="1">
    <citation type="journal article" date="2006" name="PLoS Biol.">
        <title>Metabolic complementarity and genomics of the dual bacterial symbiosis of sharpshooters.</title>
        <authorList>
            <person name="Wu D."/>
            <person name="Daugherty S.C."/>
            <person name="Van Aken S.E."/>
            <person name="Pai G.H."/>
            <person name="Watkins K.L."/>
            <person name="Khouri H."/>
            <person name="Tallon L.J."/>
            <person name="Zaborsky J.M."/>
            <person name="Dunbar H.E."/>
            <person name="Tran P.L."/>
            <person name="Moran N.A."/>
            <person name="Eisen J.A."/>
        </authorList>
    </citation>
    <scope>NUCLEOTIDE SEQUENCE [LARGE SCALE GENOMIC DNA]</scope>
</reference>
<sequence length="84" mass="9187">MAHKKAGGSTRNGRDSESKRLGVKIFGHQIAKAGSIIIRQRGTKFHPGTNVGCGKDHTLFALTKGKVHFQTKKGNRKFISIITE</sequence>
<gene>
    <name evidence="1" type="primary">rpmA</name>
    <name type="ordered locus">BCI_0643</name>
</gene>
<accession>Q1LSJ8</accession>
<comment type="similarity">
    <text evidence="1">Belongs to the bacterial ribosomal protein bL27 family.</text>
</comment>
<feature type="chain" id="PRO_1000017416" description="Large ribosomal subunit protein bL27">
    <location>
        <begin position="1"/>
        <end position="84"/>
    </location>
</feature>
<feature type="region of interest" description="Disordered" evidence="2">
    <location>
        <begin position="1"/>
        <end position="21"/>
    </location>
</feature>
<name>RL27_BAUCH</name>